<reference key="1">
    <citation type="submission" date="2000-05" db="EMBL/GenBank/DDBJ databases">
        <title>Structural analysis of Arabidopsis thaliana chromosome 3. III.</title>
        <authorList>
            <person name="Nakamura Y."/>
        </authorList>
    </citation>
    <scope>NUCLEOTIDE SEQUENCE [LARGE SCALE GENOMIC DNA]</scope>
    <source>
        <strain>cv. Columbia</strain>
    </source>
</reference>
<reference key="2">
    <citation type="journal article" date="2017" name="Plant J.">
        <title>Araport11: a complete reannotation of the Arabidopsis thaliana reference genome.</title>
        <authorList>
            <person name="Cheng C.Y."/>
            <person name="Krishnakumar V."/>
            <person name="Chan A.P."/>
            <person name="Thibaud-Nissen F."/>
            <person name="Schobel S."/>
            <person name="Town C.D."/>
        </authorList>
    </citation>
    <scope>GENOME REANNOTATION</scope>
    <source>
        <strain>cv. Columbia</strain>
    </source>
</reference>
<reference key="3">
    <citation type="journal article" date="2002" name="Planta">
        <title>The plant PDR family of ABC transporters.</title>
        <authorList>
            <person name="van den Brule S."/>
            <person name="Smart C.C."/>
        </authorList>
    </citation>
    <scope>IDENTIFICATION</scope>
    <scope>TISSUE SPECIFICITY</scope>
</reference>
<reference key="4">
    <citation type="journal article" date="2006" name="FEBS Lett.">
        <title>Organization and function of the plant pleiotropic drug resistance ABC transporter family.</title>
        <authorList>
            <person name="Crouzet J."/>
            <person name="Trombik T."/>
            <person name="Fraysse A.S."/>
            <person name="Boutry M."/>
        </authorList>
    </citation>
    <scope>GENE FAMILY</scope>
    <scope>NOMENCLATURE</scope>
</reference>
<reference key="5">
    <citation type="journal article" date="2008" name="Trends Plant Sci.">
        <title>Plant ABC proteins - a unified nomenclature and updated inventory.</title>
        <authorList>
            <person name="Verrier P.J."/>
            <person name="Bird D."/>
            <person name="Burla B."/>
            <person name="Dassa E."/>
            <person name="Forestier C."/>
            <person name="Geisler M."/>
            <person name="Klein M."/>
            <person name="Kolukisaoglu H.U."/>
            <person name="Lee Y."/>
            <person name="Martinoia E."/>
            <person name="Murphy A."/>
            <person name="Rea P.A."/>
            <person name="Samuels L."/>
            <person name="Schulz B."/>
            <person name="Spalding E.J."/>
            <person name="Yazaki K."/>
            <person name="Theodoulou F.L."/>
        </authorList>
    </citation>
    <scope>GENE FAMILY</scope>
    <scope>NOMENCLATURE</scope>
</reference>
<proteinExistence type="evidence at transcript level"/>
<organism>
    <name type="scientific">Arabidopsis thaliana</name>
    <name type="common">Mouse-ear cress</name>
    <dbReference type="NCBI Taxonomy" id="3702"/>
    <lineage>
        <taxon>Eukaryota</taxon>
        <taxon>Viridiplantae</taxon>
        <taxon>Streptophyta</taxon>
        <taxon>Embryophyta</taxon>
        <taxon>Tracheophyta</taxon>
        <taxon>Spermatophyta</taxon>
        <taxon>Magnoliopsida</taxon>
        <taxon>eudicotyledons</taxon>
        <taxon>Gunneridae</taxon>
        <taxon>Pentapetalae</taxon>
        <taxon>rosids</taxon>
        <taxon>malvids</taxon>
        <taxon>Brassicales</taxon>
        <taxon>Brassicaceae</taxon>
        <taxon>Camelineae</taxon>
        <taxon>Arabidopsis</taxon>
    </lineage>
</organism>
<comment type="function">
    <text evidence="1">May be a general defense protein.</text>
</comment>
<comment type="subcellular location">
    <subcellularLocation>
        <location evidence="1">Membrane</location>
        <topology evidence="1">Multi-pass membrane protein</topology>
    </subcellularLocation>
</comment>
<comment type="tissue specificity">
    <text evidence="5">Expressed in roots and siliques at low levels.</text>
</comment>
<comment type="similarity">
    <text evidence="6">Belongs to the ABC transporter superfamily. ABCG family. PDR (TC 3.A.1.205) subfamily.</text>
</comment>
<comment type="sequence caution" evidence="6">
    <conflict type="erroneous gene model prediction">
        <sequence resource="EMBL-CDS" id="BAB02609"/>
    </conflict>
</comment>
<feature type="chain" id="PRO_0000234637" description="ABC transporter G family member 38">
    <location>
        <begin position="1"/>
        <end position="1418"/>
    </location>
</feature>
<feature type="transmembrane region" description="Helical" evidence="2">
    <location>
        <begin position="516"/>
        <end position="536"/>
    </location>
</feature>
<feature type="transmembrane region" description="Helical" evidence="2">
    <location>
        <begin position="548"/>
        <end position="568"/>
    </location>
</feature>
<feature type="transmembrane region" description="Helical" evidence="2">
    <location>
        <begin position="600"/>
        <end position="620"/>
    </location>
</feature>
<feature type="transmembrane region" description="Helical" evidence="2">
    <location>
        <begin position="634"/>
        <end position="654"/>
    </location>
</feature>
<feature type="transmembrane region" description="Helical" evidence="2">
    <location>
        <begin position="659"/>
        <end position="679"/>
    </location>
</feature>
<feature type="transmembrane region" description="Helical" evidence="2">
    <location>
        <begin position="729"/>
        <end position="749"/>
    </location>
</feature>
<feature type="transmembrane region" description="Helical" evidence="2">
    <location>
        <begin position="1167"/>
        <end position="1187"/>
    </location>
</feature>
<feature type="transmembrane region" description="Helical" evidence="2">
    <location>
        <begin position="1197"/>
        <end position="1217"/>
    </location>
</feature>
<feature type="transmembrane region" description="Helical" evidence="2">
    <location>
        <begin position="1249"/>
        <end position="1269"/>
    </location>
</feature>
<feature type="transmembrane region" description="Helical" evidence="2">
    <location>
        <begin position="1284"/>
        <end position="1304"/>
    </location>
</feature>
<feature type="transmembrane region" description="Helical" evidence="2">
    <location>
        <begin position="1310"/>
        <end position="1330"/>
    </location>
</feature>
<feature type="transmembrane region" description="Helical" evidence="2">
    <location>
        <begin position="1341"/>
        <end position="1361"/>
    </location>
</feature>
<feature type="transmembrane region" description="Helical" evidence="2">
    <location>
        <begin position="1387"/>
        <end position="1407"/>
    </location>
</feature>
<feature type="domain" description="ABC transporter 1" evidence="3">
    <location>
        <begin position="147"/>
        <end position="419"/>
    </location>
</feature>
<feature type="domain" description="ABC transmembrane type-2 1">
    <location>
        <begin position="497"/>
        <end position="710"/>
    </location>
</feature>
<feature type="domain" description="ABC transporter 2" evidence="3">
    <location>
        <begin position="821"/>
        <end position="1073"/>
    </location>
</feature>
<feature type="domain" description="ABC transmembrane type-2 2">
    <location>
        <begin position="1146"/>
        <end position="1360"/>
    </location>
</feature>
<feature type="region of interest" description="Disordered" evidence="4">
    <location>
        <begin position="1"/>
        <end position="27"/>
    </location>
</feature>
<feature type="binding site" evidence="3">
    <location>
        <begin position="179"/>
        <end position="186"/>
    </location>
    <ligand>
        <name>ATP</name>
        <dbReference type="ChEBI" id="CHEBI:30616"/>
        <label>1</label>
    </ligand>
</feature>
<feature type="binding site" evidence="3">
    <location>
        <begin position="866"/>
        <end position="873"/>
    </location>
    <ligand>
        <name>ATP</name>
        <dbReference type="ChEBI" id="CHEBI:30616"/>
        <label>2</label>
    </ligand>
</feature>
<gene>
    <name type="primary">ABCG38</name>
    <name type="synonym">PDR10</name>
    <name type="ordered locus">At3g30842</name>
    <name type="ORF">MJI6.3</name>
</gene>
<sequence length="1418" mass="161362">MAHYRVSSEVENIMNRDRSHRKNEEEDEEEALKLAAMEKLQRLPTYDRARKAVLKGITGGFKEIDMKDLGLAERRELFDRVMTMDDEDWHGEYLRRLKSRFDRVSLHLPTIEVRFEDLNVTAEAYAGSKTVPTVLNSYVNLLKGIGTKIRVLPDRKKRISILNDVSGIIKPGRLTLLLGPPGSGKSTLLKALSGKTETGLRSTGKVTYNGHELHEFVPERTAGYIDQYDVHLPDLTVRETLKFSAKCQGVGTGYDMLAELLRREKDLNIKPDPYLDALMKASVIKGHKEYVVTDYVLKVLGLEICADTIVGNHMKRGISGGQKKRVTTGEMLVGPVGAFFMDNISDGLDSSTTFQIVKSIKQMIHVFDKTALISLLQPPPETFELFDDVIILGEGHIVYQGPREDVLEFFEFMGFKCPERKGIADYLQEILSKKDQEQYWANPELPYRYVTAKKFEEGFKIHHFGRAMRSQLATPFDRLKNHRAALTRTTYGASKLELLKACLERESILMKRNLRTFVLKSLQLIINAILIGVVFWQQKNYPSTVEDGIIYMGAIYLEVQMIVFSGFFELPMTIDKLPVFYKQRHFSFYPSWAFSLPTSIITFPLSFVEVFIVVLITYFTIGYDLTVPSFLKHYLVLALCGQMSYGLFRCIAAVTRNHVVSNTMGCLAVMWLMTFSGYVLSRNQVHKWLTWAYWTSPMMYIQTAVSVNEFRSESWKDGLGVAVLKSRGFFVETYWYWIGLLALILSTILSNIITSLCLAFLKQYGISKTAVLPDEREEADSNNTTGRDYTGTTMERFFDRVVTTRTCNDKKLRIPFKPLYMTFENITYSVDTPKEMKEKGIRENKLVLLNGLSGAFRPGVLTALMGVSGAGKTTLMDVLAGRKNTGYIQGEIYVSGFPKKQDSFARVSGYCEQSDIHSPLLTVYESLLYSAWLRLPPDIDTHTRELFIEEVMELIELKALREMLVGYVGISGLSTEQRKRMTIAVELVANPSILFMDEPTSGLDARAAAIVMRTVRNTVDTGRTVVCTIHQPSIDIFESFDELFLLTRGGEEIYVGPIGHHSSQLIEYFEGIRGVGKIKEGYNPATWALEVTTRAQEDVLGVTFAQVYKKSNLYRRNKDLIKELNNIPPHAQDIHFSTKYSQSYLSQFQACLWKQHKSYWRNVPYNAVRFSFGAAVGIMYGIIFWSLGKRKGTRQDIFNSVGAMSTVVGFLSSQSAATVRPVVIAERTVFYREAGAGMYSALPYAFSQVIIEIPYTMAQACIYGVIVYGMIGYEWTASKFFLNIFFTFISILYSIYTGIMVISVSPNQEIASILNGVISTSWNVFSGFTIPRPRMHVWLRWFTYVCPGWWGLYGLTIAQYGDVETRLDTGETVVEFMKNYYGYEYNFLWVVSLTLIAFSMFFVFIYAFSVKILNFQKR</sequence>
<accession>Q7PC85</accession>
<accession>F4J7V6</accession>
<accession>Q9LHK8</accession>
<name>AB38G_ARATH</name>
<protein>
    <recommendedName>
        <fullName>ABC transporter G family member 38</fullName>
        <shortName>ABC transporter ABCG.38</shortName>
        <shortName>AtABCG38</shortName>
    </recommendedName>
    <alternativeName>
        <fullName>Pleiotropic drug resistance protein 10</fullName>
    </alternativeName>
</protein>
<keyword id="KW-0067">ATP-binding</keyword>
<keyword id="KW-0472">Membrane</keyword>
<keyword id="KW-0547">Nucleotide-binding</keyword>
<keyword id="KW-1185">Reference proteome</keyword>
<keyword id="KW-0677">Repeat</keyword>
<keyword id="KW-0812">Transmembrane</keyword>
<keyword id="KW-1133">Transmembrane helix</keyword>
<keyword id="KW-0813">Transport</keyword>
<dbReference type="EMBL" id="AP002043">
    <property type="protein sequence ID" value="BAB02609.1"/>
    <property type="status" value="ALT_SEQ"/>
    <property type="molecule type" value="Genomic_DNA"/>
</dbReference>
<dbReference type="EMBL" id="CP002686">
    <property type="protein sequence ID" value="AEE77665.2"/>
    <property type="molecule type" value="Genomic_DNA"/>
</dbReference>
<dbReference type="EMBL" id="BK001009">
    <property type="protein sequence ID" value="DAA00878.1"/>
    <property type="molecule type" value="Genomic_DNA"/>
</dbReference>
<dbReference type="RefSeq" id="NP_001319673.1">
    <property type="nucleotide sequence ID" value="NM_001339062.1"/>
</dbReference>
<dbReference type="SMR" id="Q7PC85"/>
<dbReference type="FunCoup" id="Q7PC85">
    <property type="interactions" value="267"/>
</dbReference>
<dbReference type="STRING" id="3702.Q7PC85"/>
<dbReference type="GlyGen" id="Q7PC85">
    <property type="glycosylation" value="1 site"/>
</dbReference>
<dbReference type="PaxDb" id="3702-AT3G30842.1"/>
<dbReference type="ProteomicsDB" id="244513"/>
<dbReference type="EnsemblPlants" id="AT3G30842.1">
    <property type="protein sequence ID" value="AT3G30842.1"/>
    <property type="gene ID" value="AT3G30842"/>
</dbReference>
<dbReference type="GeneID" id="822863"/>
<dbReference type="Gramene" id="AT3G30842.1">
    <property type="protein sequence ID" value="AT3G30842.1"/>
    <property type="gene ID" value="AT3G30842"/>
</dbReference>
<dbReference type="KEGG" id="ath:AT3G30842"/>
<dbReference type="Araport" id="AT3G30842"/>
<dbReference type="TAIR" id="AT3G30842">
    <property type="gene designation" value="ABCG38"/>
</dbReference>
<dbReference type="eggNOG" id="KOG0065">
    <property type="taxonomic scope" value="Eukaryota"/>
</dbReference>
<dbReference type="InParanoid" id="Q7PC85"/>
<dbReference type="OMA" id="QYMANLN"/>
<dbReference type="PhylomeDB" id="Q7PC85"/>
<dbReference type="PRO" id="PR:Q7PC85"/>
<dbReference type="Proteomes" id="UP000006548">
    <property type="component" value="Chromosome 3"/>
</dbReference>
<dbReference type="ExpressionAtlas" id="Q7PC85">
    <property type="expression patterns" value="baseline and differential"/>
</dbReference>
<dbReference type="GO" id="GO:0016020">
    <property type="term" value="C:membrane"/>
    <property type="evidence" value="ECO:0007669"/>
    <property type="project" value="UniProtKB-SubCell"/>
</dbReference>
<dbReference type="GO" id="GO:0140359">
    <property type="term" value="F:ABC-type transporter activity"/>
    <property type="evidence" value="ECO:0007669"/>
    <property type="project" value="InterPro"/>
</dbReference>
<dbReference type="GO" id="GO:0005524">
    <property type="term" value="F:ATP binding"/>
    <property type="evidence" value="ECO:0007669"/>
    <property type="project" value="UniProtKB-KW"/>
</dbReference>
<dbReference type="GO" id="GO:0016887">
    <property type="term" value="F:ATP hydrolysis activity"/>
    <property type="evidence" value="ECO:0007669"/>
    <property type="project" value="InterPro"/>
</dbReference>
<dbReference type="CDD" id="cd03233">
    <property type="entry name" value="ABCG_PDR_domain1"/>
    <property type="match status" value="1"/>
</dbReference>
<dbReference type="CDD" id="cd03232">
    <property type="entry name" value="ABCG_PDR_domain2"/>
    <property type="match status" value="1"/>
</dbReference>
<dbReference type="FunFam" id="3.40.50.300:FF:000179">
    <property type="entry name" value="ABC transporter G family member 34"/>
    <property type="match status" value="1"/>
</dbReference>
<dbReference type="FunFam" id="3.40.50.300:FF:000059">
    <property type="entry name" value="ABC transporter G family member 40"/>
    <property type="match status" value="1"/>
</dbReference>
<dbReference type="Gene3D" id="3.40.50.300">
    <property type="entry name" value="P-loop containing nucleotide triphosphate hydrolases"/>
    <property type="match status" value="2"/>
</dbReference>
<dbReference type="InterPro" id="IPR003593">
    <property type="entry name" value="AAA+_ATPase"/>
</dbReference>
<dbReference type="InterPro" id="IPR013525">
    <property type="entry name" value="ABC2_TM"/>
</dbReference>
<dbReference type="InterPro" id="IPR029481">
    <property type="entry name" value="ABC_trans_N"/>
</dbReference>
<dbReference type="InterPro" id="IPR003439">
    <property type="entry name" value="ABC_transporter-like_ATP-bd"/>
</dbReference>
<dbReference type="InterPro" id="IPR043926">
    <property type="entry name" value="ABCG_dom"/>
</dbReference>
<dbReference type="InterPro" id="IPR034001">
    <property type="entry name" value="ABCG_PDR_1"/>
</dbReference>
<dbReference type="InterPro" id="IPR034003">
    <property type="entry name" value="ABCG_PDR_2"/>
</dbReference>
<dbReference type="InterPro" id="IPR027417">
    <property type="entry name" value="P-loop_NTPase"/>
</dbReference>
<dbReference type="InterPro" id="IPR013581">
    <property type="entry name" value="PDR_assoc"/>
</dbReference>
<dbReference type="PANTHER" id="PTHR48040:SF45">
    <property type="entry name" value="PLEIOTROPIC DRUG RESISTANCE PROTEIN 1-LIKE"/>
    <property type="match status" value="1"/>
</dbReference>
<dbReference type="PANTHER" id="PTHR48040">
    <property type="entry name" value="PLEIOTROPIC DRUG RESISTANCE PROTEIN 1-LIKE ISOFORM X1"/>
    <property type="match status" value="1"/>
</dbReference>
<dbReference type="Pfam" id="PF01061">
    <property type="entry name" value="ABC2_membrane"/>
    <property type="match status" value="2"/>
</dbReference>
<dbReference type="Pfam" id="PF19055">
    <property type="entry name" value="ABC2_membrane_7"/>
    <property type="match status" value="1"/>
</dbReference>
<dbReference type="Pfam" id="PF00005">
    <property type="entry name" value="ABC_tran"/>
    <property type="match status" value="2"/>
</dbReference>
<dbReference type="Pfam" id="PF14510">
    <property type="entry name" value="ABC_trans_N"/>
    <property type="match status" value="1"/>
</dbReference>
<dbReference type="Pfam" id="PF08370">
    <property type="entry name" value="PDR_assoc"/>
    <property type="match status" value="1"/>
</dbReference>
<dbReference type="SMART" id="SM00382">
    <property type="entry name" value="AAA"/>
    <property type="match status" value="2"/>
</dbReference>
<dbReference type="SUPFAM" id="SSF52540">
    <property type="entry name" value="P-loop containing nucleoside triphosphate hydrolases"/>
    <property type="match status" value="2"/>
</dbReference>
<dbReference type="PROSITE" id="PS50893">
    <property type="entry name" value="ABC_TRANSPORTER_2"/>
    <property type="match status" value="2"/>
</dbReference>
<evidence type="ECO:0000250" key="1"/>
<evidence type="ECO:0000255" key="2"/>
<evidence type="ECO:0000255" key="3">
    <source>
        <dbReference type="PROSITE-ProRule" id="PRU00434"/>
    </source>
</evidence>
<evidence type="ECO:0000256" key="4">
    <source>
        <dbReference type="SAM" id="MobiDB-lite"/>
    </source>
</evidence>
<evidence type="ECO:0000269" key="5">
    <source>
    </source>
</evidence>
<evidence type="ECO:0000305" key="6"/>